<reference key="1">
    <citation type="submission" date="2008-01" db="EMBL/GenBank/DDBJ databases">
        <title>Complete sequence of Pseudomonas putida GB-1.</title>
        <authorList>
            <consortium name="US DOE Joint Genome Institute"/>
            <person name="Copeland A."/>
            <person name="Lucas S."/>
            <person name="Lapidus A."/>
            <person name="Barry K."/>
            <person name="Glavina del Rio T."/>
            <person name="Dalin E."/>
            <person name="Tice H."/>
            <person name="Pitluck S."/>
            <person name="Bruce D."/>
            <person name="Goodwin L."/>
            <person name="Chertkov O."/>
            <person name="Brettin T."/>
            <person name="Detter J.C."/>
            <person name="Han C."/>
            <person name="Kuske C.R."/>
            <person name="Schmutz J."/>
            <person name="Larimer F."/>
            <person name="Land M."/>
            <person name="Hauser L."/>
            <person name="Kyrpides N."/>
            <person name="Kim E."/>
            <person name="McCarthy J.K."/>
            <person name="Richardson P."/>
        </authorList>
    </citation>
    <scope>NUCLEOTIDE SEQUENCE [LARGE SCALE GENOMIC DNA]</scope>
    <source>
        <strain>GB-1</strain>
    </source>
</reference>
<dbReference type="EC" id="2.3.1.46" evidence="1"/>
<dbReference type="EMBL" id="CP000926">
    <property type="protein sequence ID" value="ABZ01032.1"/>
    <property type="molecule type" value="Genomic_DNA"/>
</dbReference>
<dbReference type="SMR" id="B0KN51"/>
<dbReference type="ESTHER" id="psepu-METX">
    <property type="family name" value="Homoserine_transacetylase"/>
</dbReference>
<dbReference type="KEGG" id="ppg:PputGB1_5147"/>
<dbReference type="eggNOG" id="COG2021">
    <property type="taxonomic scope" value="Bacteria"/>
</dbReference>
<dbReference type="HOGENOM" id="CLU_028760_1_2_6"/>
<dbReference type="UniPathway" id="UPA00051">
    <property type="reaction ID" value="UER00075"/>
</dbReference>
<dbReference type="Proteomes" id="UP000002157">
    <property type="component" value="Chromosome"/>
</dbReference>
<dbReference type="GO" id="GO:0005737">
    <property type="term" value="C:cytoplasm"/>
    <property type="evidence" value="ECO:0007669"/>
    <property type="project" value="UniProtKB-SubCell"/>
</dbReference>
<dbReference type="GO" id="GO:0004414">
    <property type="term" value="F:homoserine O-acetyltransferase activity"/>
    <property type="evidence" value="ECO:0007669"/>
    <property type="project" value="TreeGrafter"/>
</dbReference>
<dbReference type="GO" id="GO:0008899">
    <property type="term" value="F:homoserine O-succinyltransferase activity"/>
    <property type="evidence" value="ECO:0007669"/>
    <property type="project" value="UniProtKB-UniRule"/>
</dbReference>
<dbReference type="GO" id="GO:0009092">
    <property type="term" value="P:homoserine metabolic process"/>
    <property type="evidence" value="ECO:0007669"/>
    <property type="project" value="TreeGrafter"/>
</dbReference>
<dbReference type="GO" id="GO:0009086">
    <property type="term" value="P:methionine biosynthetic process"/>
    <property type="evidence" value="ECO:0007669"/>
    <property type="project" value="UniProtKB-UniRule"/>
</dbReference>
<dbReference type="FunFam" id="1.10.1740.110:FF:000001">
    <property type="entry name" value="Homoserine O-acetyltransferase"/>
    <property type="match status" value="1"/>
</dbReference>
<dbReference type="Gene3D" id="1.10.1740.110">
    <property type="match status" value="1"/>
</dbReference>
<dbReference type="Gene3D" id="3.40.50.1820">
    <property type="entry name" value="alpha/beta hydrolase"/>
    <property type="match status" value="1"/>
</dbReference>
<dbReference type="HAMAP" id="MF_00296">
    <property type="entry name" value="MetX_acyltransf"/>
    <property type="match status" value="1"/>
</dbReference>
<dbReference type="InterPro" id="IPR000073">
    <property type="entry name" value="AB_hydrolase_1"/>
</dbReference>
<dbReference type="InterPro" id="IPR029058">
    <property type="entry name" value="AB_hydrolase_fold"/>
</dbReference>
<dbReference type="InterPro" id="IPR008220">
    <property type="entry name" value="HAT_MetX-like"/>
</dbReference>
<dbReference type="NCBIfam" id="TIGR01392">
    <property type="entry name" value="homoserO_Ac_trn"/>
    <property type="match status" value="1"/>
</dbReference>
<dbReference type="NCBIfam" id="NF001209">
    <property type="entry name" value="PRK00175.1"/>
    <property type="match status" value="1"/>
</dbReference>
<dbReference type="PANTHER" id="PTHR32268">
    <property type="entry name" value="HOMOSERINE O-ACETYLTRANSFERASE"/>
    <property type="match status" value="1"/>
</dbReference>
<dbReference type="PANTHER" id="PTHR32268:SF11">
    <property type="entry name" value="HOMOSERINE O-ACETYLTRANSFERASE"/>
    <property type="match status" value="1"/>
</dbReference>
<dbReference type="Pfam" id="PF00561">
    <property type="entry name" value="Abhydrolase_1"/>
    <property type="match status" value="1"/>
</dbReference>
<dbReference type="PIRSF" id="PIRSF000443">
    <property type="entry name" value="Homoser_Ac_trans"/>
    <property type="match status" value="1"/>
</dbReference>
<dbReference type="SUPFAM" id="SSF53474">
    <property type="entry name" value="alpha/beta-Hydrolases"/>
    <property type="match status" value="1"/>
</dbReference>
<sequence length="379" mass="41590">MSTVFPVDSVGLVVPQTARFDEPLALACGRSLASYELVYETYGTLNASASNAVLICHALSGHHHAAGYHAATDRKPGWWDSCIGPGKPIDTNRFFVVSLNNLGGCNGSTGPSSVNPATGKPYGADFPVLTVEDWVHSQVRLGERLGIQQWAAVVGGSLGGMQALQWTISYPERVRHCVDIASAPKLSAQNIAFNEVARQAILTDPEFHGGSFQDQGVIPKRGLMLARMVGHITYLSDDSMGEKFGRELKSDKLNYDFHSVEFQVESYLRYQGEEFSGRFDANTYLLMTKALDYFDPAAAQGGDLAATLAHVTADYCIMSFTTDWRFSPARSREIVDALMAARKNVCYLEIDSPYGHDAFLIPTPRYMQGFSNYMNRIAI</sequence>
<keyword id="KW-0012">Acyltransferase</keyword>
<keyword id="KW-0028">Amino-acid biosynthesis</keyword>
<keyword id="KW-0963">Cytoplasm</keyword>
<keyword id="KW-0486">Methionine biosynthesis</keyword>
<keyword id="KW-0808">Transferase</keyword>
<protein>
    <recommendedName>
        <fullName evidence="1">Homoserine O-succinyltransferase</fullName>
        <shortName evidence="1">HST</shortName>
        <ecNumber evidence="1">2.3.1.46</ecNumber>
    </recommendedName>
    <alternativeName>
        <fullName evidence="1">Homoserine transsuccinylase</fullName>
        <shortName evidence="1">HTS</shortName>
    </alternativeName>
</protein>
<organism>
    <name type="scientific">Pseudomonas putida (strain GB-1)</name>
    <dbReference type="NCBI Taxonomy" id="76869"/>
    <lineage>
        <taxon>Bacteria</taxon>
        <taxon>Pseudomonadati</taxon>
        <taxon>Pseudomonadota</taxon>
        <taxon>Gammaproteobacteria</taxon>
        <taxon>Pseudomonadales</taxon>
        <taxon>Pseudomonadaceae</taxon>
        <taxon>Pseudomonas</taxon>
    </lineage>
</organism>
<feature type="chain" id="PRO_1000078946" description="Homoserine O-succinyltransferase">
    <location>
        <begin position="1"/>
        <end position="379"/>
    </location>
</feature>
<feature type="domain" description="AB hydrolase-1" evidence="1">
    <location>
        <begin position="51"/>
        <end position="360"/>
    </location>
</feature>
<feature type="active site" description="Nucleophile" evidence="1">
    <location>
        <position position="157"/>
    </location>
</feature>
<feature type="active site" evidence="1">
    <location>
        <position position="323"/>
    </location>
</feature>
<feature type="active site" evidence="1">
    <location>
        <position position="356"/>
    </location>
</feature>
<feature type="binding site" evidence="1">
    <location>
        <position position="227"/>
    </location>
    <ligand>
        <name>substrate</name>
    </ligand>
</feature>
<feature type="binding site" evidence="1">
    <location>
        <position position="357"/>
    </location>
    <ligand>
        <name>substrate</name>
    </ligand>
</feature>
<feature type="site" description="Important for acyl-CoA specificity" evidence="1">
    <location>
        <position position="325"/>
    </location>
</feature>
<accession>B0KN51</accession>
<proteinExistence type="inferred from homology"/>
<evidence type="ECO:0000255" key="1">
    <source>
        <dbReference type="HAMAP-Rule" id="MF_00296"/>
    </source>
</evidence>
<gene>
    <name evidence="1" type="primary">metXS</name>
    <name type="ordered locus">PputGB1_5147</name>
</gene>
<comment type="function">
    <text evidence="1">Transfers a succinyl group from succinyl-CoA to L-homoserine, forming succinyl-L-homoserine.</text>
</comment>
<comment type="catalytic activity">
    <reaction evidence="1">
        <text>L-homoserine + succinyl-CoA = O-succinyl-L-homoserine + CoA</text>
        <dbReference type="Rhea" id="RHEA:22008"/>
        <dbReference type="ChEBI" id="CHEBI:57287"/>
        <dbReference type="ChEBI" id="CHEBI:57292"/>
        <dbReference type="ChEBI" id="CHEBI:57476"/>
        <dbReference type="ChEBI" id="CHEBI:57661"/>
        <dbReference type="EC" id="2.3.1.46"/>
    </reaction>
</comment>
<comment type="pathway">
    <text evidence="1">Amino-acid biosynthesis; L-methionine biosynthesis via de novo pathway; O-succinyl-L-homoserine from L-homoserine: step 1/1.</text>
</comment>
<comment type="subunit">
    <text evidence="1">Homodimer.</text>
</comment>
<comment type="subcellular location">
    <subcellularLocation>
        <location evidence="1">Cytoplasm</location>
    </subcellularLocation>
</comment>
<comment type="similarity">
    <text evidence="1">Belongs to the AB hydrolase superfamily. MetX family.</text>
</comment>
<name>METXS_PSEPG</name>